<name>EIF3I_HUMAN</name>
<proteinExistence type="evidence at protein level"/>
<reference key="1">
    <citation type="journal article" date="1997" name="J. Biol. Chem.">
        <title>Conservation and diversity of eukaryotic translation initiation factor eIF3.</title>
        <authorList>
            <person name="Asano K."/>
            <person name="Kinzy T.G."/>
            <person name="Merrick W.C."/>
            <person name="Hershey J.W.B."/>
        </authorList>
    </citation>
    <scope>NUCLEOTIDE SEQUENCE [MRNA]</scope>
    <source>
        <tissue>Brain</tissue>
    </source>
</reference>
<reference key="2">
    <citation type="journal article" date="1995" name="Nature">
        <title>A WD-domain protein that is associated with and phosphorylated by the type II TGF-beta receptor.</title>
        <authorList>
            <person name="Chen R.H."/>
            <person name="Miettinen P.J."/>
            <person name="Maruka E.M."/>
            <person name="Choy L."/>
            <person name="Derynck R."/>
        </authorList>
    </citation>
    <scope>NUCLEOTIDE SEQUENCE [MRNA]</scope>
</reference>
<reference key="3">
    <citation type="journal article" date="2004" name="Genome Res.">
        <title>The status, quality, and expansion of the NIH full-length cDNA project: the Mammalian Gene Collection (MGC).</title>
        <authorList>
            <consortium name="The MGC Project Team"/>
        </authorList>
    </citation>
    <scope>NUCLEOTIDE SEQUENCE [LARGE SCALE MRNA]</scope>
    <source>
        <tissue>Lung</tissue>
        <tissue>Muscle</tissue>
    </source>
</reference>
<reference key="4">
    <citation type="submission" date="2007-03" db="UniProtKB">
        <authorList>
            <person name="Lubec G."/>
            <person name="Afjehi-Sadat L."/>
        </authorList>
    </citation>
    <scope>PROTEIN SEQUENCE OF 269-280 AND 283-298</scope>
    <scope>IDENTIFICATION BY MASS SPECTROMETRY</scope>
    <source>
        <tissue>Brain</tissue>
        <tissue>Cajal-Retzius cell</tissue>
    </source>
</reference>
<reference key="5">
    <citation type="journal article" date="2003" name="Eur. J. Biochem.">
        <title>Characterization of eIF3k: a newly discovered subunit of mammalian translation initiation factor eIF3.</title>
        <authorList>
            <person name="Mayeur G.L."/>
            <person name="Fraser C.S."/>
            <person name="Peiretti F."/>
            <person name="Block K.L."/>
            <person name="Hershey J.W.B."/>
        </authorList>
    </citation>
    <scope>INTERACTION WITH EIF3B</scope>
</reference>
<reference key="6">
    <citation type="journal article" date="2004" name="J. Biol. Chem.">
        <title>The j-subunit of human translation initiation factor eIF3 is required for the stable binding of eIF3 and its subcomplexes to 40 S ribosomal subunits in vitro.</title>
        <authorList>
            <person name="Fraser C.S."/>
            <person name="Lee J.Y."/>
            <person name="Mayeur G.L."/>
            <person name="Bushell M."/>
            <person name="Doudna J.A."/>
            <person name="Hershey J.W.B."/>
        </authorList>
    </citation>
    <scope>INTERACTION WITH EIF3B</scope>
</reference>
<reference key="7">
    <citation type="journal article" date="2005" name="Nat. Biotechnol.">
        <title>Immunoaffinity profiling of tyrosine phosphorylation in cancer cells.</title>
        <authorList>
            <person name="Rush J."/>
            <person name="Moritz A."/>
            <person name="Lee K.A."/>
            <person name="Guo A."/>
            <person name="Goss V.L."/>
            <person name="Spek E.J."/>
            <person name="Zhang H."/>
            <person name="Zha X.-M."/>
            <person name="Polakiewicz R.D."/>
            <person name="Comb M.J."/>
        </authorList>
    </citation>
    <scope>PHOSPHORYLATION [LARGE SCALE ANALYSIS] AT TYR-308</scope>
    <scope>IDENTIFICATION BY MASS SPECTROMETRY [LARGE SCALE ANALYSIS]</scope>
</reference>
<reference key="8">
    <citation type="journal article" date="2005" name="RNA">
        <title>Binding of eukaryotic initiation factor 3 to ribosomal 40S subunits and its role in ribosomal dissociation and anti-association.</title>
        <authorList>
            <person name="Kolupaeva V.G."/>
            <person name="Unbehaun A."/>
            <person name="Lomakin I.B."/>
            <person name="Hellen C.U.T."/>
            <person name="Pestova T.V."/>
        </authorList>
    </citation>
    <scope>CHARACTERIZATION OF THE EIF-3 COMPLEX</scope>
</reference>
<reference key="9">
    <citation type="journal article" date="2006" name="J. Biol. Chem.">
        <title>Translation initiation factor eIF4G-1 binds to eIF3 through the eIF3e subunit.</title>
        <authorList>
            <person name="LeFebvre A.K."/>
            <person name="Korneeva N.L."/>
            <person name="Trutschl M."/>
            <person name="Cvek U."/>
            <person name="Duzan R.D."/>
            <person name="Bradley C.A."/>
            <person name="Hershey J.W.B."/>
            <person name="Rhoads R.E."/>
        </authorList>
    </citation>
    <scope>IDENTIFICATION IN THE EIF-3 COMPLEX</scope>
    <scope>IDENTIFICATION BY MASS SPECTROMETRY</scope>
</reference>
<reference key="10">
    <citation type="journal article" date="2007" name="EMBO J.">
        <title>Reconstitution reveals the functional core of mammalian eIF3.</title>
        <authorList>
            <person name="Masutani M."/>
            <person name="Sonenberg N."/>
            <person name="Yokoyama S."/>
            <person name="Imataka H."/>
        </authorList>
    </citation>
    <scope>FUNCTION</scope>
    <scope>CHARACTERIZATION OF THE EIF-3 COMPLEX</scope>
</reference>
<reference key="11">
    <citation type="journal article" date="2007" name="Mol. Cell. Proteomics">
        <title>Structural characterization of the human eukaryotic initiation factor 3 protein complex by mass spectrometry.</title>
        <authorList>
            <person name="Damoc E."/>
            <person name="Fraser C.S."/>
            <person name="Zhou M."/>
            <person name="Videler H."/>
            <person name="Mayeur G.L."/>
            <person name="Hershey J.W.B."/>
            <person name="Doudna J.A."/>
            <person name="Robinson C.V."/>
            <person name="Leary J.A."/>
        </authorList>
    </citation>
    <scope>IDENTIFICATION IN THE EIF-3 COMPLEX</scope>
    <scope>CHARACTERIZATION OF THE EIF-3 COMPLEX</scope>
    <scope>MASS SPECTROMETRY</scope>
</reference>
<reference key="12">
    <citation type="journal article" date="2008" name="Proc. Natl. Acad. Sci. U.S.A.">
        <title>Mass spectrometry reveals modularity and a complete subunit interaction map of the eukaryotic translation factor eIF3.</title>
        <authorList>
            <person name="Zhou M."/>
            <person name="Sandercock A.M."/>
            <person name="Fraser C.S."/>
            <person name="Ridlova G."/>
            <person name="Stephens E."/>
            <person name="Schenauer M.R."/>
            <person name="Yokoi-Fong T."/>
            <person name="Barsky D."/>
            <person name="Leary J.A."/>
            <person name="Hershey J.W.B."/>
            <person name="Doudna J.A."/>
            <person name="Robinson C.V."/>
        </authorList>
    </citation>
    <scope>IDENTIFICATION IN THE EIF-3 COMPLEX</scope>
    <scope>CHARACTERIZATION OF THE EIF-3 COMPLEX</scope>
    <scope>MASS SPECTROMETRY</scope>
</reference>
<reference key="13">
    <citation type="journal article" date="2009" name="Science">
        <title>Lysine acetylation targets protein complexes and co-regulates major cellular functions.</title>
        <authorList>
            <person name="Choudhary C."/>
            <person name="Kumar C."/>
            <person name="Gnad F."/>
            <person name="Nielsen M.L."/>
            <person name="Rehman M."/>
            <person name="Walther T.C."/>
            <person name="Olsen J.V."/>
            <person name="Mann M."/>
        </authorList>
    </citation>
    <scope>ACETYLATION [LARGE SCALE ANALYSIS] AT LYS-264</scope>
    <scope>IDENTIFICATION BY MASS SPECTROMETRY [LARGE SCALE ANALYSIS]</scope>
</reference>
<reference key="14">
    <citation type="journal article" date="2011" name="BMC Syst. Biol.">
        <title>Initial characterization of the human central proteome.</title>
        <authorList>
            <person name="Burkard T.R."/>
            <person name="Planyavsky M."/>
            <person name="Kaupe I."/>
            <person name="Breitwieser F.P."/>
            <person name="Buerckstuemmer T."/>
            <person name="Bennett K.L."/>
            <person name="Superti-Furga G."/>
            <person name="Colinge J."/>
        </authorList>
    </citation>
    <scope>IDENTIFICATION BY MASS SPECTROMETRY [LARGE SCALE ANALYSIS]</scope>
</reference>
<reference key="15">
    <citation type="journal article" date="2013" name="J. Proteome Res.">
        <title>Toward a comprehensive characterization of a human cancer cell phosphoproteome.</title>
        <authorList>
            <person name="Zhou H."/>
            <person name="Di Palma S."/>
            <person name="Preisinger C."/>
            <person name="Peng M."/>
            <person name="Polat A.N."/>
            <person name="Heck A.J."/>
            <person name="Mohammed S."/>
        </authorList>
    </citation>
    <scope>PHOSPHORYLATION [LARGE SCALE ANALYSIS] AT THR-219</scope>
    <scope>IDENTIFICATION BY MASS SPECTROMETRY [LARGE SCALE ANALYSIS]</scope>
    <source>
        <tissue>Cervix carcinoma</tissue>
        <tissue>Erythroleukemia</tissue>
    </source>
</reference>
<reference key="16">
    <citation type="journal article" date="2015" name="Nature">
        <title>eIF3 targets cell-proliferation messenger RNAs for translational activation or repression.</title>
        <authorList>
            <person name="Lee A.S."/>
            <person name="Kranzusch P.J."/>
            <person name="Cate J.H."/>
        </authorList>
    </citation>
    <scope>FUNCTION</scope>
    <scope>IDENTIFICATION IN THE EIF-3 COMPLEX</scope>
</reference>
<reference key="17">
    <citation type="journal article" date="2015" name="Proteomics">
        <title>N-terminome analysis of the human mitochondrial proteome.</title>
        <authorList>
            <person name="Vaca Jacome A.S."/>
            <person name="Rabilloud T."/>
            <person name="Schaeffer-Reiss C."/>
            <person name="Rompais M."/>
            <person name="Ayoub D."/>
            <person name="Lane L."/>
            <person name="Bairoch A."/>
            <person name="Van Dorsselaer A."/>
            <person name="Carapito C."/>
        </authorList>
    </citation>
    <scope>IDENTIFICATION BY MASS SPECTROMETRY [LARGE SCALE ANALYSIS]</scope>
</reference>
<reference key="18">
    <citation type="journal article" date="2016" name="Nature">
        <title>eIF3d is an mRNA cap-binding protein that is required for specialized translation initiation.</title>
        <authorList>
            <person name="Lee A.S."/>
            <person name="Kranzusch P.J."/>
            <person name="Doudna J.A."/>
            <person name="Cate J.H."/>
        </authorList>
    </citation>
    <scope>FUNCTION</scope>
</reference>
<reference key="19">
    <citation type="journal article" date="2005" name="Science">
        <title>Structural roles for human translation factor eIF3 in initiation of protein synthesis.</title>
        <authorList>
            <person name="Siridechadilok B."/>
            <person name="Fraser C.S."/>
            <person name="Hall R.J."/>
            <person name="Doudna J.A."/>
            <person name="Nogales E."/>
        </authorList>
    </citation>
    <scope>3D-STRUCTURE MODELING</scope>
    <scope>ELECTRON MICROSCOPY</scope>
</reference>
<keyword id="KW-0002">3D-structure</keyword>
<keyword id="KW-0007">Acetylation</keyword>
<keyword id="KW-0963">Cytoplasm</keyword>
<keyword id="KW-0903">Direct protein sequencing</keyword>
<keyword id="KW-0396">Initiation factor</keyword>
<keyword id="KW-1017">Isopeptide bond</keyword>
<keyword id="KW-0597">Phosphoprotein</keyword>
<keyword id="KW-0648">Protein biosynthesis</keyword>
<keyword id="KW-1267">Proteomics identification</keyword>
<keyword id="KW-1185">Reference proteome</keyword>
<keyword id="KW-0677">Repeat</keyword>
<keyword id="KW-0832">Ubl conjugation</keyword>
<keyword id="KW-0853">WD repeat</keyword>
<organism>
    <name type="scientific">Homo sapiens</name>
    <name type="common">Human</name>
    <dbReference type="NCBI Taxonomy" id="9606"/>
    <lineage>
        <taxon>Eukaryota</taxon>
        <taxon>Metazoa</taxon>
        <taxon>Chordata</taxon>
        <taxon>Craniata</taxon>
        <taxon>Vertebrata</taxon>
        <taxon>Euteleostomi</taxon>
        <taxon>Mammalia</taxon>
        <taxon>Eutheria</taxon>
        <taxon>Euarchontoglires</taxon>
        <taxon>Primates</taxon>
        <taxon>Haplorrhini</taxon>
        <taxon>Catarrhini</taxon>
        <taxon>Hominidae</taxon>
        <taxon>Homo</taxon>
    </lineage>
</organism>
<feature type="chain" id="PRO_0000051036" description="Eukaryotic translation initiation factor 3 subunit I">
    <location>
        <begin position="1"/>
        <end position="325"/>
    </location>
</feature>
<feature type="repeat" description="WD 1">
    <location>
        <begin position="1"/>
        <end position="39"/>
    </location>
</feature>
<feature type="repeat" description="WD 2">
    <location>
        <begin position="43"/>
        <end position="81"/>
    </location>
</feature>
<feature type="repeat" description="WD 3">
    <location>
        <begin position="87"/>
        <end position="127"/>
    </location>
</feature>
<feature type="repeat" description="WD 4">
    <location>
        <begin position="135"/>
        <end position="175"/>
    </location>
</feature>
<feature type="repeat" description="WD 5">
    <location>
        <begin position="180"/>
        <end position="217"/>
    </location>
</feature>
<feature type="repeat" description="WD 6">
    <location>
        <begin position="221"/>
        <end position="267"/>
    </location>
</feature>
<feature type="repeat" description="WD 7">
    <location>
        <begin position="275"/>
        <end position="316"/>
    </location>
</feature>
<feature type="modified residue" description="Phosphothreonine" evidence="12">
    <location>
        <position position="219"/>
    </location>
</feature>
<feature type="modified residue" description="N6-acetyllysine" evidence="11">
    <location>
        <position position="264"/>
    </location>
</feature>
<feature type="modified residue" description="Phosphotyrosine" evidence="10">
    <location>
        <position position="308"/>
    </location>
</feature>
<feature type="cross-link" description="Glycyl lysine isopeptide (Lys-Gly) (interchain with G-Cter in ubiquitin)">
    <location>
        <position position="282"/>
    </location>
</feature>
<gene>
    <name evidence="1" type="primary">EIF3I</name>
    <name evidence="1" type="synonym">EIF3S2</name>
    <name type="synonym">TRIP1</name>
</gene>
<sequence>MKPILLQGHERSITQIKYNREGDLLFTVAKDPIVNVWYSVNGERLGTYMGHTGAVWCVDADWDTKHVLTGSADNSCRLWDCETGKQLALLKTNSAVRTCGFDFGGNIIMFSTDKQMGYQCFVSFFDLRDPSQIDNNEPYMKIPCNDSKITSAVWGPLGECIIAGHESGELNQYSAKSGEVLVNVKEHSRQINDIQLSRDMTMFVTASKDNTAKLFDSTTLEHQKTFRTERPVNSAALSPNYDHVVLGGGQEAMDVTTTSTRIGKFEARFFHLAFEEEFGRVKGHFGPINSVAFHPDGKSYSSGGEDGYVRIHYFDPQYFEFEFEA</sequence>
<accession>Q13347</accession>
<evidence type="ECO:0000255" key="1">
    <source>
        <dbReference type="HAMAP-Rule" id="MF_03008"/>
    </source>
</evidence>
<evidence type="ECO:0000269" key="2">
    <source>
    </source>
</evidence>
<evidence type="ECO:0000269" key="3">
    <source>
    </source>
</evidence>
<evidence type="ECO:0000269" key="4">
    <source>
    </source>
</evidence>
<evidence type="ECO:0000269" key="5">
    <source>
    </source>
</evidence>
<evidence type="ECO:0000269" key="6">
    <source>
    </source>
</evidence>
<evidence type="ECO:0000269" key="7">
    <source>
    </source>
</evidence>
<evidence type="ECO:0000269" key="8">
    <source>
    </source>
</evidence>
<evidence type="ECO:0000269" key="9">
    <source>
    </source>
</evidence>
<evidence type="ECO:0007744" key="10">
    <source>
    </source>
</evidence>
<evidence type="ECO:0007744" key="11">
    <source>
    </source>
</evidence>
<evidence type="ECO:0007744" key="12">
    <source>
    </source>
</evidence>
<dbReference type="EMBL" id="U39067">
    <property type="protein sequence ID" value="AAC97144.1"/>
    <property type="molecule type" value="mRNA"/>
</dbReference>
<dbReference type="EMBL" id="U36764">
    <property type="protein sequence ID" value="AAC50224.1"/>
    <property type="molecule type" value="mRNA"/>
</dbReference>
<dbReference type="EMBL" id="BC000413">
    <property type="protein sequence ID" value="AAH00413.1"/>
    <property type="molecule type" value="mRNA"/>
</dbReference>
<dbReference type="EMBL" id="BC003140">
    <property type="protein sequence ID" value="AAH03140.1"/>
    <property type="molecule type" value="mRNA"/>
</dbReference>
<dbReference type="CCDS" id="CCDS357.1"/>
<dbReference type="PIR" id="S60335">
    <property type="entry name" value="S60335"/>
</dbReference>
<dbReference type="RefSeq" id="NP_003748.1">
    <property type="nucleotide sequence ID" value="NM_003757.4"/>
</dbReference>
<dbReference type="PDB" id="6YBT">
    <property type="method" value="EM"/>
    <property type="resolution" value="6.00 A"/>
    <property type="chains" value="2=1-325"/>
</dbReference>
<dbReference type="PDB" id="6ZMW">
    <property type="method" value="EM"/>
    <property type="resolution" value="3.70 A"/>
    <property type="chains" value="2=1-325"/>
</dbReference>
<dbReference type="PDB" id="6ZON">
    <property type="method" value="EM"/>
    <property type="resolution" value="3.00 A"/>
    <property type="chains" value="I=1-325"/>
</dbReference>
<dbReference type="PDB" id="6ZP4">
    <property type="method" value="EM"/>
    <property type="resolution" value="2.90 A"/>
    <property type="chains" value="I=1-325"/>
</dbReference>
<dbReference type="PDB" id="6ZVJ">
    <property type="method" value="EM"/>
    <property type="resolution" value="3.80 A"/>
    <property type="chains" value="I=1-316"/>
</dbReference>
<dbReference type="PDB" id="7A09">
    <property type="method" value="EM"/>
    <property type="resolution" value="3.50 A"/>
    <property type="chains" value="I=1-325"/>
</dbReference>
<dbReference type="PDB" id="8OZ0">
    <property type="method" value="EM"/>
    <property type="resolution" value="3.50 A"/>
    <property type="chains" value="F=1-325"/>
</dbReference>
<dbReference type="PDB" id="8PJ1">
    <property type="method" value="EM"/>
    <property type="resolution" value="3.40 A"/>
    <property type="chains" value="2=1-325"/>
</dbReference>
<dbReference type="PDB" id="8PJ2">
    <property type="method" value="EM"/>
    <property type="resolution" value="3.40 A"/>
    <property type="chains" value="2=1-325"/>
</dbReference>
<dbReference type="PDB" id="8PJ3">
    <property type="method" value="EM"/>
    <property type="resolution" value="3.70 A"/>
    <property type="chains" value="2=1-325"/>
</dbReference>
<dbReference type="PDB" id="8PJ4">
    <property type="method" value="EM"/>
    <property type="resolution" value="3.20 A"/>
    <property type="chains" value="2=1-325"/>
</dbReference>
<dbReference type="PDB" id="8PJ5">
    <property type="method" value="EM"/>
    <property type="resolution" value="2.90 A"/>
    <property type="chains" value="2=1-325"/>
</dbReference>
<dbReference type="PDB" id="8PJ6">
    <property type="method" value="EM"/>
    <property type="resolution" value="2.90 A"/>
    <property type="chains" value="2=1-325"/>
</dbReference>
<dbReference type="PDB" id="8XXN">
    <property type="method" value="EM"/>
    <property type="resolution" value="3.60 A"/>
    <property type="chains" value="3I=1-325"/>
</dbReference>
<dbReference type="PDB" id="9BLN">
    <property type="method" value="EM"/>
    <property type="resolution" value="3.90 A"/>
    <property type="chains" value="X=1-325"/>
</dbReference>
<dbReference type="PDBsum" id="6YBT"/>
<dbReference type="PDBsum" id="6ZMW"/>
<dbReference type="PDBsum" id="6ZON"/>
<dbReference type="PDBsum" id="6ZP4"/>
<dbReference type="PDBsum" id="6ZVJ"/>
<dbReference type="PDBsum" id="7A09"/>
<dbReference type="PDBsum" id="8OZ0"/>
<dbReference type="PDBsum" id="8PJ1"/>
<dbReference type="PDBsum" id="8PJ2"/>
<dbReference type="PDBsum" id="8PJ3"/>
<dbReference type="PDBsum" id="8PJ4"/>
<dbReference type="PDBsum" id="8PJ5"/>
<dbReference type="PDBsum" id="8PJ6"/>
<dbReference type="PDBsum" id="8XXN"/>
<dbReference type="PDBsum" id="9BLN"/>
<dbReference type="EMDB" id="EMD-10773"/>
<dbReference type="EMDB" id="EMD-11302"/>
<dbReference type="EMDB" id="EMD-11325"/>
<dbReference type="EMDB" id="EMD-11335"/>
<dbReference type="EMDB" id="EMD-11458"/>
<dbReference type="EMDB" id="EMD-11602"/>
<dbReference type="EMDB" id="EMD-17297"/>
<dbReference type="EMDB" id="EMD-17696"/>
<dbReference type="EMDB" id="EMD-17697"/>
<dbReference type="EMDB" id="EMD-17698"/>
<dbReference type="EMDB" id="EMD-17699"/>
<dbReference type="EMDB" id="EMD-17700"/>
<dbReference type="EMDB" id="EMD-17701"/>
<dbReference type="EMDB" id="EMD-38754"/>
<dbReference type="EMDB" id="EMD-44671"/>
<dbReference type="SMR" id="Q13347"/>
<dbReference type="BioGRID" id="114217">
    <property type="interactions" value="271"/>
</dbReference>
<dbReference type="ComplexPortal" id="CPX-6036">
    <property type="entry name" value="Eukaryotic translation initiation factor 3 complex"/>
</dbReference>
<dbReference type="CORUM" id="Q13347"/>
<dbReference type="DIP" id="DIP-31116N"/>
<dbReference type="FunCoup" id="Q13347">
    <property type="interactions" value="1791"/>
</dbReference>
<dbReference type="IntAct" id="Q13347">
    <property type="interactions" value="131"/>
</dbReference>
<dbReference type="MINT" id="Q13347"/>
<dbReference type="STRING" id="9606.ENSP00000362688"/>
<dbReference type="ChEMBL" id="CHEMBL4295814"/>
<dbReference type="GlyGen" id="Q13347">
    <property type="glycosylation" value="1 site, 1 O-linked glycan (1 site)"/>
</dbReference>
<dbReference type="iPTMnet" id="Q13347"/>
<dbReference type="MetOSite" id="Q13347"/>
<dbReference type="PhosphoSitePlus" id="Q13347"/>
<dbReference type="SwissPalm" id="Q13347"/>
<dbReference type="BioMuta" id="EIF3I"/>
<dbReference type="DMDM" id="2494895"/>
<dbReference type="OGP" id="Q13347"/>
<dbReference type="jPOST" id="Q13347"/>
<dbReference type="MassIVE" id="Q13347"/>
<dbReference type="PaxDb" id="9606-ENSP00000362688"/>
<dbReference type="PeptideAtlas" id="Q13347"/>
<dbReference type="ProteomicsDB" id="59333"/>
<dbReference type="Pumba" id="Q13347"/>
<dbReference type="Antibodypedia" id="31260">
    <property type="antibodies" value="166 antibodies from 27 providers"/>
</dbReference>
<dbReference type="DNASU" id="8668"/>
<dbReference type="Ensembl" id="ENST00000676801.1">
    <property type="protein sequence ID" value="ENSP00000503348.1"/>
    <property type="gene ID" value="ENSG00000084623.12"/>
</dbReference>
<dbReference type="Ensembl" id="ENST00000677202.1">
    <property type="protein sequence ID" value="ENSP00000504034.1"/>
    <property type="gene ID" value="ENSG00000084623.12"/>
</dbReference>
<dbReference type="Ensembl" id="ENST00000677701.1">
    <property type="protein sequence ID" value="ENSP00000503539.1"/>
    <property type="gene ID" value="ENSG00000084623.12"/>
</dbReference>
<dbReference type="Ensembl" id="ENST00000677711.2">
    <property type="protein sequence ID" value="ENSP00000504061.1"/>
    <property type="gene ID" value="ENSG00000084623.12"/>
</dbReference>
<dbReference type="Ensembl" id="ENST00000677760.1">
    <property type="protein sequence ID" value="ENSP00000502867.1"/>
    <property type="gene ID" value="ENSG00000084623.12"/>
</dbReference>
<dbReference type="GeneID" id="8668"/>
<dbReference type="KEGG" id="hsa:8668"/>
<dbReference type="MANE-Select" id="ENST00000677711.2">
    <property type="protein sequence ID" value="ENSP00000504061.1"/>
    <property type="RefSeq nucleotide sequence ID" value="NM_003757.4"/>
    <property type="RefSeq protein sequence ID" value="NP_003748.1"/>
</dbReference>
<dbReference type="AGR" id="HGNC:3272"/>
<dbReference type="CTD" id="8668"/>
<dbReference type="DisGeNET" id="8668"/>
<dbReference type="GeneCards" id="EIF3I"/>
<dbReference type="HGNC" id="HGNC:3272">
    <property type="gene designation" value="EIF3I"/>
</dbReference>
<dbReference type="HPA" id="ENSG00000084623">
    <property type="expression patterns" value="Low tissue specificity"/>
</dbReference>
<dbReference type="MIM" id="603911">
    <property type="type" value="gene"/>
</dbReference>
<dbReference type="neXtProt" id="NX_Q13347"/>
<dbReference type="OpenTargets" id="ENSG00000084623"/>
<dbReference type="PharmGKB" id="PA162384875"/>
<dbReference type="VEuPathDB" id="HostDB:ENSG00000084623"/>
<dbReference type="eggNOG" id="KOG0643">
    <property type="taxonomic scope" value="Eukaryota"/>
</dbReference>
<dbReference type="GeneTree" id="ENSGT00940000161371"/>
<dbReference type="HOGENOM" id="CLU_043845_0_0_1"/>
<dbReference type="InParanoid" id="Q13347"/>
<dbReference type="OMA" id="VWFSHNG"/>
<dbReference type="OrthoDB" id="24966at2759"/>
<dbReference type="PAN-GO" id="Q13347">
    <property type="GO annotations" value="4 GO annotations based on evolutionary models"/>
</dbReference>
<dbReference type="PhylomeDB" id="Q13347"/>
<dbReference type="TreeFam" id="TF101515"/>
<dbReference type="PathwayCommons" id="Q13347"/>
<dbReference type="Reactome" id="R-HSA-156827">
    <property type="pathway name" value="L13a-mediated translational silencing of Ceruloplasmin expression"/>
</dbReference>
<dbReference type="Reactome" id="R-HSA-72649">
    <property type="pathway name" value="Translation initiation complex formation"/>
</dbReference>
<dbReference type="Reactome" id="R-HSA-72689">
    <property type="pathway name" value="Formation of a pool of free 40S subunits"/>
</dbReference>
<dbReference type="Reactome" id="R-HSA-72695">
    <property type="pathway name" value="Formation of the ternary complex, and subsequently, the 43S complex"/>
</dbReference>
<dbReference type="Reactome" id="R-HSA-72702">
    <property type="pathway name" value="Ribosomal scanning and start codon recognition"/>
</dbReference>
<dbReference type="Reactome" id="R-HSA-72706">
    <property type="pathway name" value="GTP hydrolysis and joining of the 60S ribosomal subunit"/>
</dbReference>
<dbReference type="SignaLink" id="Q13347"/>
<dbReference type="SIGNOR" id="Q13347"/>
<dbReference type="BioGRID-ORCS" id="8668">
    <property type="hits" value="842 hits in 1138 CRISPR screens"/>
</dbReference>
<dbReference type="CD-CODE" id="DEE660B4">
    <property type="entry name" value="Stress granule"/>
</dbReference>
<dbReference type="ChiTaRS" id="EIF3I">
    <property type="organism name" value="human"/>
</dbReference>
<dbReference type="GeneWiki" id="EIF3I"/>
<dbReference type="GenomeRNAi" id="8668"/>
<dbReference type="Pharos" id="Q13347">
    <property type="development level" value="Tbio"/>
</dbReference>
<dbReference type="PRO" id="PR:Q13347"/>
<dbReference type="Proteomes" id="UP000005640">
    <property type="component" value="Chromosome 1"/>
</dbReference>
<dbReference type="RNAct" id="Q13347">
    <property type="molecule type" value="protein"/>
</dbReference>
<dbReference type="Bgee" id="ENSG00000084623">
    <property type="expression patterns" value="Expressed in islet of Langerhans and 207 other cell types or tissues"/>
</dbReference>
<dbReference type="ExpressionAtlas" id="Q13347">
    <property type="expression patterns" value="baseline and differential"/>
</dbReference>
<dbReference type="GO" id="GO:0005829">
    <property type="term" value="C:cytosol"/>
    <property type="evidence" value="ECO:0000304"/>
    <property type="project" value="Reactome"/>
</dbReference>
<dbReference type="GO" id="GO:0016282">
    <property type="term" value="C:eukaryotic 43S preinitiation complex"/>
    <property type="evidence" value="ECO:0007669"/>
    <property type="project" value="UniProtKB-UniRule"/>
</dbReference>
<dbReference type="GO" id="GO:0033290">
    <property type="term" value="C:eukaryotic 48S preinitiation complex"/>
    <property type="evidence" value="ECO:0007669"/>
    <property type="project" value="UniProtKB-UniRule"/>
</dbReference>
<dbReference type="GO" id="GO:0005852">
    <property type="term" value="C:eukaryotic translation initiation factor 3 complex"/>
    <property type="evidence" value="ECO:0000314"/>
    <property type="project" value="UniProtKB"/>
</dbReference>
<dbReference type="GO" id="GO:0071541">
    <property type="term" value="C:eukaryotic translation initiation factor 3 complex, eIF3m"/>
    <property type="evidence" value="ECO:0000318"/>
    <property type="project" value="GO_Central"/>
</dbReference>
<dbReference type="GO" id="GO:0070062">
    <property type="term" value="C:extracellular exosome"/>
    <property type="evidence" value="ECO:0007005"/>
    <property type="project" value="UniProtKB"/>
</dbReference>
<dbReference type="GO" id="GO:0045202">
    <property type="term" value="C:synapse"/>
    <property type="evidence" value="ECO:0007669"/>
    <property type="project" value="Ensembl"/>
</dbReference>
<dbReference type="GO" id="GO:0003723">
    <property type="term" value="F:RNA binding"/>
    <property type="evidence" value="ECO:0000318"/>
    <property type="project" value="GO_Central"/>
</dbReference>
<dbReference type="GO" id="GO:0003743">
    <property type="term" value="F:translation initiation factor activity"/>
    <property type="evidence" value="ECO:0000314"/>
    <property type="project" value="UniProtKB"/>
</dbReference>
<dbReference type="GO" id="GO:0002183">
    <property type="term" value="P:cytoplasmic translational initiation"/>
    <property type="evidence" value="ECO:0000318"/>
    <property type="project" value="GO_Central"/>
</dbReference>
<dbReference type="GO" id="GO:0001732">
    <property type="term" value="P:formation of cytoplasmic translation initiation complex"/>
    <property type="evidence" value="ECO:0000303"/>
    <property type="project" value="ComplexPortal"/>
</dbReference>
<dbReference type="GO" id="GO:0006413">
    <property type="term" value="P:translational initiation"/>
    <property type="evidence" value="ECO:0000314"/>
    <property type="project" value="UniProtKB"/>
</dbReference>
<dbReference type="FunFam" id="2.130.10.10:FF:000127">
    <property type="entry name" value="Eukaryotic translation initiation factor 3 subunit I"/>
    <property type="match status" value="1"/>
</dbReference>
<dbReference type="Gene3D" id="2.130.10.10">
    <property type="entry name" value="YVTN repeat-like/Quinoprotein amine dehydrogenase"/>
    <property type="match status" value="1"/>
</dbReference>
<dbReference type="HAMAP" id="MF_03008">
    <property type="entry name" value="eIF3i"/>
    <property type="match status" value="1"/>
</dbReference>
<dbReference type="InterPro" id="IPR027525">
    <property type="entry name" value="eIF3i"/>
</dbReference>
<dbReference type="InterPro" id="IPR015943">
    <property type="entry name" value="WD40/YVTN_repeat-like_dom_sf"/>
</dbReference>
<dbReference type="InterPro" id="IPR019775">
    <property type="entry name" value="WD40_repeat_CS"/>
</dbReference>
<dbReference type="InterPro" id="IPR036322">
    <property type="entry name" value="WD40_repeat_dom_sf"/>
</dbReference>
<dbReference type="InterPro" id="IPR001680">
    <property type="entry name" value="WD40_rpt"/>
</dbReference>
<dbReference type="PANTHER" id="PTHR19877">
    <property type="entry name" value="EUKARYOTIC TRANSLATION INITIATION FACTOR 3 SUBUNIT I"/>
    <property type="match status" value="1"/>
</dbReference>
<dbReference type="PANTHER" id="PTHR19877:SF1">
    <property type="entry name" value="EUKARYOTIC TRANSLATION INITIATION FACTOR 3 SUBUNIT I"/>
    <property type="match status" value="1"/>
</dbReference>
<dbReference type="Pfam" id="PF24805">
    <property type="entry name" value="EIF3I"/>
    <property type="match status" value="1"/>
</dbReference>
<dbReference type="SMART" id="SM00320">
    <property type="entry name" value="WD40"/>
    <property type="match status" value="5"/>
</dbReference>
<dbReference type="SUPFAM" id="SSF50978">
    <property type="entry name" value="WD40 repeat-like"/>
    <property type="match status" value="1"/>
</dbReference>
<dbReference type="PROSITE" id="PS00678">
    <property type="entry name" value="WD_REPEATS_1"/>
    <property type="match status" value="1"/>
</dbReference>
<dbReference type="PROSITE" id="PS50082">
    <property type="entry name" value="WD_REPEATS_2"/>
    <property type="match status" value="4"/>
</dbReference>
<dbReference type="PROSITE" id="PS50294">
    <property type="entry name" value="WD_REPEATS_REGION"/>
    <property type="match status" value="2"/>
</dbReference>
<protein>
    <recommendedName>
        <fullName evidence="1">Eukaryotic translation initiation factor 3 subunit I</fullName>
        <shortName evidence="1">eIF3i</shortName>
    </recommendedName>
    <alternativeName>
        <fullName evidence="1">Eukaryotic translation initiation factor 3 subunit 2</fullName>
    </alternativeName>
    <alternativeName>
        <fullName>TGF-beta receptor-interacting protein 1</fullName>
        <shortName>TRIP-1</shortName>
    </alternativeName>
    <alternativeName>
        <fullName evidence="1">eIF-3-beta</fullName>
    </alternativeName>
    <alternativeName>
        <fullName evidence="1">eIF3 p36</fullName>
    </alternativeName>
</protein>
<comment type="function">
    <text evidence="1 6 8 9">Component of the eukaryotic translation initiation factor 3 (eIF-3) complex, which is required for several steps in the initiation of protein synthesis (PubMed:17581632, PubMed:25849773, PubMed:27462815). The eIF-3 complex associates with the 40S ribosome and facilitates the recruitment of eIF-1, eIF-1A, eIF-2:GTP:methionyl-tRNAi and eIF-5 to form the 43S pre-initiation complex (43S PIC). The eIF-3 complex stimulates mRNA recruitment to the 43S PIC and scanning of the mRNA for AUG recognition. The eIF-3 complex is also required for disassembly and recycling of post-termination ribosomal complexes and subsequently prevents premature joining of the 40S and 60S ribosomal subunits prior to initiation (PubMed:17581632). The eIF-3 complex specifically targets and initiates translation of a subset of mRNAs involved in cell proliferation, including cell cycling, differentiation and apoptosis, and uses different modes of RNA stem-loop binding to exert either translational activation or repression (PubMed:25849773).</text>
</comment>
<comment type="subunit">
    <text evidence="1 2 3 4 5 7 8">Component of the eukaryotic translation initiation factor 3 (eIF-3) complex, which is composed of 13 subunits: EIF3A, EIF3B, EIF3C, EIF3D, EIF3E, EIF3F, EIF3G, EIF3H, EIF3I, EIF3J, EIF3K, EIF3L and EIF3M. The eIF-3 complex appears to include 3 stable modules: module A is composed of EIF3A, EIF3B, EIF3G and EIF3I; module B is composed of EIF3F, EIF3H, and EIF3M; and module C is composed of EIF3C, EIF3D, EIF3E, EIF3K and EIF3L. EIF3C of module C binds EIF3B of module A and EIF3H of module B, thereby linking the three modules. EIF3J is a labile subunit that binds to the eIF-3 complex via EIF3B. The eIF-3 complex interacts with RPS6KB1 under conditions of nutrient depletion. Mitogenic stimulation leads to binding and activation of a complex composed of MTOR and RPTOR, leading to phosphorylation and release of RPS6KB1 and binding of EIF4B to eIF-3.</text>
</comment>
<comment type="interaction">
    <interactant intactId="EBI-354047">
        <id>Q13347</id>
    </interactant>
    <interactant intactId="EBI-718729">
        <id>P55212</id>
        <label>CASP6</label>
    </interactant>
    <organismsDiffer>false</organismsDiffer>
    <experiments>3</experiments>
</comment>
<comment type="interaction">
    <interactant intactId="EBI-354047">
        <id>Q13347</id>
    </interactant>
    <interactant intactId="EBI-2114729">
        <id>Q6UXB4</id>
        <label>CLEC4G</label>
    </interactant>
    <organismsDiffer>false</organismsDiffer>
    <experiments>3</experiments>
</comment>
<comment type="interaction">
    <interactant intactId="EBI-354047">
        <id>Q13347</id>
    </interactant>
    <interactant intactId="EBI-366696">
        <id>P55884</id>
        <label>EIF3B</label>
    </interactant>
    <organismsDiffer>false</organismsDiffer>
    <experiments>11</experiments>
</comment>
<comment type="interaction">
    <interactant intactId="EBI-354047">
        <id>Q13347</id>
    </interactant>
    <interactant intactId="EBI-366632">
        <id>O75821</id>
        <label>EIF3G</label>
    </interactant>
    <organismsDiffer>false</organismsDiffer>
    <experiments>7</experiments>
</comment>
<comment type="interaction">
    <interactant intactId="EBI-354047">
        <id>Q13347</id>
    </interactant>
    <interactant intactId="EBI-466029">
        <id>P42858</id>
        <label>HTT</label>
    </interactant>
    <organismsDiffer>false</organismsDiffer>
    <experiments>13</experiments>
</comment>
<comment type="interaction">
    <interactant intactId="EBI-354047">
        <id>Q13347</id>
    </interactant>
    <interactant intactId="EBI-21591415">
        <id>P13473-2</id>
        <label>LAMP2</label>
    </interactant>
    <organismsDiffer>false</organismsDiffer>
    <experiments>3</experiments>
</comment>
<comment type="subcellular location">
    <subcellularLocation>
        <location evidence="1">Cytoplasm</location>
    </subcellularLocation>
</comment>
<comment type="PTM">
    <text evidence="1">Phosphorylated by TGF-beta type II receptor.</text>
</comment>
<comment type="mass spectrometry"/>
<comment type="mass spectrometry"/>
<comment type="similarity">
    <text evidence="1">Belongs to the eIF-3 subunit I family.</text>
</comment>